<geneLocation type="chloroplast"/>
<protein>
    <recommendedName>
        <fullName evidence="1">NAD(P)H-quinone oxidoreductase subunit I, chloroplastic</fullName>
        <ecNumber evidence="1">7.1.1.-</ecNumber>
    </recommendedName>
    <alternativeName>
        <fullName evidence="1">NAD(P)H dehydrogenase subunit I</fullName>
        <shortName evidence="1">NDH subunit I</shortName>
    </alternativeName>
    <alternativeName>
        <fullName evidence="1">NADH-plastoquinone oxidoreductase subunit I</fullName>
    </alternativeName>
</protein>
<accession>Q8HVP2</accession>
<proteinExistence type="inferred from homology"/>
<comment type="function">
    <text evidence="1">NDH shuttles electrons from NAD(P)H:plastoquinone, via FMN and iron-sulfur (Fe-S) centers, to quinones in the photosynthetic chain and possibly in a chloroplast respiratory chain. The immediate electron acceptor for the enzyme in this species is believed to be plastoquinone. Couples the redox reaction to proton translocation, and thus conserves the redox energy in a proton gradient.</text>
</comment>
<comment type="catalytic activity">
    <reaction evidence="1">
        <text>a plastoquinone + NADH + (n+1) H(+)(in) = a plastoquinol + NAD(+) + n H(+)(out)</text>
        <dbReference type="Rhea" id="RHEA:42608"/>
        <dbReference type="Rhea" id="RHEA-COMP:9561"/>
        <dbReference type="Rhea" id="RHEA-COMP:9562"/>
        <dbReference type="ChEBI" id="CHEBI:15378"/>
        <dbReference type="ChEBI" id="CHEBI:17757"/>
        <dbReference type="ChEBI" id="CHEBI:57540"/>
        <dbReference type="ChEBI" id="CHEBI:57945"/>
        <dbReference type="ChEBI" id="CHEBI:62192"/>
    </reaction>
</comment>
<comment type="catalytic activity">
    <reaction evidence="1">
        <text>a plastoquinone + NADPH + (n+1) H(+)(in) = a plastoquinol + NADP(+) + n H(+)(out)</text>
        <dbReference type="Rhea" id="RHEA:42612"/>
        <dbReference type="Rhea" id="RHEA-COMP:9561"/>
        <dbReference type="Rhea" id="RHEA-COMP:9562"/>
        <dbReference type="ChEBI" id="CHEBI:15378"/>
        <dbReference type="ChEBI" id="CHEBI:17757"/>
        <dbReference type="ChEBI" id="CHEBI:57783"/>
        <dbReference type="ChEBI" id="CHEBI:58349"/>
        <dbReference type="ChEBI" id="CHEBI:62192"/>
    </reaction>
</comment>
<comment type="cofactor">
    <cofactor evidence="1">
        <name>[4Fe-4S] cluster</name>
        <dbReference type="ChEBI" id="CHEBI:49883"/>
    </cofactor>
    <text evidence="1">Binds 2 [4Fe-4S] clusters per subunit.</text>
</comment>
<comment type="subunit">
    <text evidence="1">NDH is composed of at least 16 different subunits, 5 of which are encoded in the nucleus.</text>
</comment>
<comment type="subcellular location">
    <subcellularLocation>
        <location evidence="1">Plastid</location>
        <location evidence="1">Chloroplast thylakoid membrane</location>
        <topology evidence="1">Peripheral membrane protein</topology>
    </subcellularLocation>
</comment>
<comment type="similarity">
    <text evidence="1">Belongs to the complex I 23 kDa subunit family.</text>
</comment>
<sequence length="166" mass="19475">MFPMVTEFMNYGQQTVRAARYIGQGFMITLSHANRLPVTIQYPYEKLITSERFRGRIHFEFDKCIACEVCVRVCPIDLPVVDWKLETDIRKKRLLNYSIDFGICIFCGNCVEYCPTNCLSMTEEYELSTYDRHELNYNQIALGRLPMSIIDDYTIRTILNLPEIKT</sequence>
<keyword id="KW-0004">4Fe-4S</keyword>
<keyword id="KW-0150">Chloroplast</keyword>
<keyword id="KW-0408">Iron</keyword>
<keyword id="KW-0411">Iron-sulfur</keyword>
<keyword id="KW-0472">Membrane</keyword>
<keyword id="KW-0479">Metal-binding</keyword>
<keyword id="KW-0520">NAD</keyword>
<keyword id="KW-0521">NADP</keyword>
<keyword id="KW-0934">Plastid</keyword>
<keyword id="KW-0618">Plastoquinone</keyword>
<keyword id="KW-0874">Quinone</keyword>
<keyword id="KW-0677">Repeat</keyword>
<keyword id="KW-0793">Thylakoid</keyword>
<keyword id="KW-1278">Translocase</keyword>
<organism>
    <name type="scientific">Monolopia gracilens</name>
    <name type="common">Woodland monolopia</name>
    <dbReference type="NCBI Taxonomy" id="149448"/>
    <lineage>
        <taxon>Eukaryota</taxon>
        <taxon>Viridiplantae</taxon>
        <taxon>Streptophyta</taxon>
        <taxon>Embryophyta</taxon>
        <taxon>Tracheophyta</taxon>
        <taxon>Spermatophyta</taxon>
        <taxon>Magnoliopsida</taxon>
        <taxon>eudicotyledons</taxon>
        <taxon>Gunneridae</taxon>
        <taxon>Pentapetalae</taxon>
        <taxon>asterids</taxon>
        <taxon>campanulids</taxon>
        <taxon>Asterales</taxon>
        <taxon>Asteraceae</taxon>
        <taxon>Asteroideae</taxon>
        <taxon>Heliantheae alliance</taxon>
        <taxon>Madieae</taxon>
        <taxon>Baeriinae</taxon>
        <taxon>Monolopia</taxon>
    </lineage>
</organism>
<gene>
    <name evidence="1" type="primary">ndhI</name>
</gene>
<name>NDHI_MONGR</name>
<reference key="1">
    <citation type="submission" date="2003-01" db="EMBL/GenBank/DDBJ databases">
        <title>Chloroplast DNA phylogeny of tribe Heliantheae (Asteraceae).</title>
        <authorList>
            <person name="Panero J.L."/>
            <person name="Baldwin B.G."/>
            <person name="Schilling E.E."/>
            <person name="Clevinger J.A."/>
        </authorList>
    </citation>
    <scope>NUCLEOTIDE SEQUENCE [GENOMIC DNA]</scope>
</reference>
<feature type="chain" id="PRO_0000250819" description="NAD(P)H-quinone oxidoreductase subunit I, chloroplastic">
    <location>
        <begin position="1"/>
        <end position="166"/>
    </location>
</feature>
<feature type="domain" description="4Fe-4S ferredoxin-type 1" evidence="1">
    <location>
        <begin position="55"/>
        <end position="84"/>
    </location>
</feature>
<feature type="domain" description="4Fe-4S ferredoxin-type 2" evidence="1">
    <location>
        <begin position="95"/>
        <end position="124"/>
    </location>
</feature>
<feature type="binding site" evidence="1">
    <location>
        <position position="64"/>
    </location>
    <ligand>
        <name>[4Fe-4S] cluster</name>
        <dbReference type="ChEBI" id="CHEBI:49883"/>
        <label>1</label>
    </ligand>
</feature>
<feature type="binding site" evidence="1">
    <location>
        <position position="67"/>
    </location>
    <ligand>
        <name>[4Fe-4S] cluster</name>
        <dbReference type="ChEBI" id="CHEBI:49883"/>
        <label>1</label>
    </ligand>
</feature>
<feature type="binding site" evidence="1">
    <location>
        <position position="70"/>
    </location>
    <ligand>
        <name>[4Fe-4S] cluster</name>
        <dbReference type="ChEBI" id="CHEBI:49883"/>
        <label>1</label>
    </ligand>
</feature>
<feature type="binding site" evidence="1">
    <location>
        <position position="74"/>
    </location>
    <ligand>
        <name>[4Fe-4S] cluster</name>
        <dbReference type="ChEBI" id="CHEBI:49883"/>
        <label>2</label>
    </ligand>
</feature>
<feature type="binding site" evidence="1">
    <location>
        <position position="104"/>
    </location>
    <ligand>
        <name>[4Fe-4S] cluster</name>
        <dbReference type="ChEBI" id="CHEBI:49883"/>
        <label>2</label>
    </ligand>
</feature>
<feature type="binding site" evidence="1">
    <location>
        <position position="107"/>
    </location>
    <ligand>
        <name>[4Fe-4S] cluster</name>
        <dbReference type="ChEBI" id="CHEBI:49883"/>
        <label>2</label>
    </ligand>
</feature>
<feature type="binding site" evidence="1">
    <location>
        <position position="110"/>
    </location>
    <ligand>
        <name>[4Fe-4S] cluster</name>
        <dbReference type="ChEBI" id="CHEBI:49883"/>
        <label>2</label>
    </ligand>
</feature>
<feature type="binding site" evidence="1">
    <location>
        <position position="114"/>
    </location>
    <ligand>
        <name>[4Fe-4S] cluster</name>
        <dbReference type="ChEBI" id="CHEBI:49883"/>
        <label>1</label>
    </ligand>
</feature>
<dbReference type="EC" id="7.1.1.-" evidence="1"/>
<dbReference type="EMBL" id="AF383821">
    <property type="protein sequence ID" value="AAN61762.1"/>
    <property type="molecule type" value="Genomic_DNA"/>
</dbReference>
<dbReference type="SMR" id="Q8HVP2"/>
<dbReference type="GO" id="GO:0009535">
    <property type="term" value="C:chloroplast thylakoid membrane"/>
    <property type="evidence" value="ECO:0007669"/>
    <property type="project" value="UniProtKB-SubCell"/>
</dbReference>
<dbReference type="GO" id="GO:0051539">
    <property type="term" value="F:4 iron, 4 sulfur cluster binding"/>
    <property type="evidence" value="ECO:0007669"/>
    <property type="project" value="UniProtKB-KW"/>
</dbReference>
<dbReference type="GO" id="GO:0005506">
    <property type="term" value="F:iron ion binding"/>
    <property type="evidence" value="ECO:0007669"/>
    <property type="project" value="UniProtKB-UniRule"/>
</dbReference>
<dbReference type="GO" id="GO:0008137">
    <property type="term" value="F:NADH dehydrogenase (ubiquinone) activity"/>
    <property type="evidence" value="ECO:0007669"/>
    <property type="project" value="InterPro"/>
</dbReference>
<dbReference type="GO" id="GO:0048038">
    <property type="term" value="F:quinone binding"/>
    <property type="evidence" value="ECO:0007669"/>
    <property type="project" value="UniProtKB-KW"/>
</dbReference>
<dbReference type="GO" id="GO:0019684">
    <property type="term" value="P:photosynthesis, light reaction"/>
    <property type="evidence" value="ECO:0007669"/>
    <property type="project" value="UniProtKB-UniRule"/>
</dbReference>
<dbReference type="FunFam" id="3.30.70.3270:FF:000006">
    <property type="entry name" value="NAD(P)H-quinone oxidoreductase subunit I, chloroplastic"/>
    <property type="match status" value="1"/>
</dbReference>
<dbReference type="Gene3D" id="3.30.70.3270">
    <property type="match status" value="1"/>
</dbReference>
<dbReference type="HAMAP" id="MF_01351">
    <property type="entry name" value="NDH1_NuoI"/>
    <property type="match status" value="1"/>
</dbReference>
<dbReference type="InterPro" id="IPR017896">
    <property type="entry name" value="4Fe4S_Fe-S-bd"/>
</dbReference>
<dbReference type="InterPro" id="IPR017900">
    <property type="entry name" value="4Fe4S_Fe_S_CS"/>
</dbReference>
<dbReference type="InterPro" id="IPR010226">
    <property type="entry name" value="NADH_quinone_OxRdtase_chainI"/>
</dbReference>
<dbReference type="InterPro" id="IPR004497">
    <property type="entry name" value="NDHI"/>
</dbReference>
<dbReference type="NCBIfam" id="TIGR00403">
    <property type="entry name" value="ndhI"/>
    <property type="match status" value="1"/>
</dbReference>
<dbReference type="NCBIfam" id="TIGR01971">
    <property type="entry name" value="NuoI"/>
    <property type="match status" value="1"/>
</dbReference>
<dbReference type="NCBIfam" id="NF004537">
    <property type="entry name" value="PRK05888.1-3"/>
    <property type="match status" value="1"/>
</dbReference>
<dbReference type="PANTHER" id="PTHR47275">
    <property type="entry name" value="NAD(P)H-QUINONE OXIDOREDUCTASE SUBUNIT I, CHLOROPLASTIC"/>
    <property type="match status" value="1"/>
</dbReference>
<dbReference type="PANTHER" id="PTHR47275:SF1">
    <property type="entry name" value="NAD(P)H-QUINONE OXIDOREDUCTASE SUBUNIT I, CHLOROPLASTIC"/>
    <property type="match status" value="1"/>
</dbReference>
<dbReference type="Pfam" id="PF00037">
    <property type="entry name" value="Fer4"/>
    <property type="match status" value="2"/>
</dbReference>
<dbReference type="SUPFAM" id="SSF54862">
    <property type="entry name" value="4Fe-4S ferredoxins"/>
    <property type="match status" value="1"/>
</dbReference>
<dbReference type="PROSITE" id="PS00198">
    <property type="entry name" value="4FE4S_FER_1"/>
    <property type="match status" value="2"/>
</dbReference>
<dbReference type="PROSITE" id="PS51379">
    <property type="entry name" value="4FE4S_FER_2"/>
    <property type="match status" value="2"/>
</dbReference>
<evidence type="ECO:0000255" key="1">
    <source>
        <dbReference type="HAMAP-Rule" id="MF_01351"/>
    </source>
</evidence>